<accession>Q5E8C7</accession>
<keyword id="KW-1185">Reference proteome</keyword>
<feature type="chain" id="PRO_0000227086" description="Protein SlyX homolog">
    <location>
        <begin position="1"/>
        <end position="74"/>
    </location>
</feature>
<dbReference type="EMBL" id="CP000020">
    <property type="protein sequence ID" value="AAW84719.1"/>
    <property type="molecule type" value="Genomic_DNA"/>
</dbReference>
<dbReference type="RefSeq" id="WP_011261071.1">
    <property type="nucleotide sequence ID" value="NZ_CAWLES010000001.1"/>
</dbReference>
<dbReference type="RefSeq" id="YP_203607.1">
    <property type="nucleotide sequence ID" value="NC_006840.2"/>
</dbReference>
<dbReference type="SMR" id="Q5E8C7"/>
<dbReference type="STRING" id="312309.VF_0224"/>
<dbReference type="EnsemblBacteria" id="AAW84719">
    <property type="protein sequence ID" value="AAW84719"/>
    <property type="gene ID" value="VF_0224"/>
</dbReference>
<dbReference type="GeneID" id="54162846"/>
<dbReference type="KEGG" id="vfi:VF_0224"/>
<dbReference type="PATRIC" id="fig|312309.11.peg.220"/>
<dbReference type="eggNOG" id="COG2900">
    <property type="taxonomic scope" value="Bacteria"/>
</dbReference>
<dbReference type="HOGENOM" id="CLU_180796_4_0_6"/>
<dbReference type="OrthoDB" id="5771733at2"/>
<dbReference type="Proteomes" id="UP000000537">
    <property type="component" value="Chromosome I"/>
</dbReference>
<dbReference type="Gene3D" id="1.20.5.300">
    <property type="match status" value="1"/>
</dbReference>
<dbReference type="HAMAP" id="MF_00715">
    <property type="entry name" value="SlyX"/>
    <property type="match status" value="1"/>
</dbReference>
<dbReference type="InterPro" id="IPR007236">
    <property type="entry name" value="SlyX"/>
</dbReference>
<dbReference type="NCBIfam" id="NF003357">
    <property type="entry name" value="PRK04406.1"/>
    <property type="match status" value="1"/>
</dbReference>
<dbReference type="PANTHER" id="PTHR36508">
    <property type="entry name" value="PROTEIN SLYX"/>
    <property type="match status" value="1"/>
</dbReference>
<dbReference type="PANTHER" id="PTHR36508:SF1">
    <property type="entry name" value="PROTEIN SLYX"/>
    <property type="match status" value="1"/>
</dbReference>
<dbReference type="Pfam" id="PF04102">
    <property type="entry name" value="SlyX"/>
    <property type="match status" value="1"/>
</dbReference>
<sequence>MTTTIEQLEQKISDLECQMAFQEQTIDELNDALSQQQLLITNMQVQMKFMVGKMKTMDSSNMADASEETPPPHY</sequence>
<gene>
    <name evidence="1" type="primary">slyX</name>
    <name type="ordered locus">VF_0224</name>
</gene>
<name>SLYX_ALIF1</name>
<organism>
    <name type="scientific">Aliivibrio fischeri (strain ATCC 700601 / ES114)</name>
    <name type="common">Vibrio fischeri</name>
    <dbReference type="NCBI Taxonomy" id="312309"/>
    <lineage>
        <taxon>Bacteria</taxon>
        <taxon>Pseudomonadati</taxon>
        <taxon>Pseudomonadota</taxon>
        <taxon>Gammaproteobacteria</taxon>
        <taxon>Vibrionales</taxon>
        <taxon>Vibrionaceae</taxon>
        <taxon>Aliivibrio</taxon>
    </lineage>
</organism>
<evidence type="ECO:0000255" key="1">
    <source>
        <dbReference type="HAMAP-Rule" id="MF_00715"/>
    </source>
</evidence>
<reference key="1">
    <citation type="journal article" date="2005" name="Proc. Natl. Acad. Sci. U.S.A.">
        <title>Complete genome sequence of Vibrio fischeri: a symbiotic bacterium with pathogenic congeners.</title>
        <authorList>
            <person name="Ruby E.G."/>
            <person name="Urbanowski M."/>
            <person name="Campbell J."/>
            <person name="Dunn A."/>
            <person name="Faini M."/>
            <person name="Gunsalus R."/>
            <person name="Lostroh P."/>
            <person name="Lupp C."/>
            <person name="McCann J."/>
            <person name="Millikan D."/>
            <person name="Schaefer A."/>
            <person name="Stabb E."/>
            <person name="Stevens A."/>
            <person name="Visick K."/>
            <person name="Whistler C."/>
            <person name="Greenberg E.P."/>
        </authorList>
    </citation>
    <scope>NUCLEOTIDE SEQUENCE [LARGE SCALE GENOMIC DNA]</scope>
    <source>
        <strain>ATCC 700601 / ES114</strain>
    </source>
</reference>
<comment type="similarity">
    <text evidence="1">Belongs to the SlyX family.</text>
</comment>
<protein>
    <recommendedName>
        <fullName evidence="1">Protein SlyX homolog</fullName>
    </recommendedName>
</protein>
<proteinExistence type="inferred from homology"/>